<feature type="chain" id="PRO_0000121364" description="DNA-directed RNA polymerase subunit Rpo10">
    <location>
        <begin position="1"/>
        <end position="72"/>
    </location>
</feature>
<feature type="binding site" evidence="1">
    <location>
        <position position="7"/>
    </location>
    <ligand>
        <name>Zn(2+)</name>
        <dbReference type="ChEBI" id="CHEBI:29105"/>
    </ligand>
</feature>
<feature type="binding site" evidence="1">
    <location>
        <position position="10"/>
    </location>
    <ligand>
        <name>Zn(2+)</name>
        <dbReference type="ChEBI" id="CHEBI:29105"/>
    </ligand>
</feature>
<feature type="binding site" evidence="1">
    <location>
        <position position="53"/>
    </location>
    <ligand>
        <name>Zn(2+)</name>
        <dbReference type="ChEBI" id="CHEBI:29105"/>
    </ligand>
</feature>
<feature type="binding site" evidence="1">
    <location>
        <position position="54"/>
    </location>
    <ligand>
        <name>Zn(2+)</name>
        <dbReference type="ChEBI" id="CHEBI:29105"/>
    </ligand>
</feature>
<accession>Q9HL09</accession>
<name>RPO10_THEAC</name>
<reference key="1">
    <citation type="journal article" date="2000" name="Nature">
        <title>The genome sequence of the thermoacidophilic scavenger Thermoplasma acidophilum.</title>
        <authorList>
            <person name="Ruepp A."/>
            <person name="Graml W."/>
            <person name="Santos-Martinez M.-L."/>
            <person name="Koretke K.K."/>
            <person name="Volker C."/>
            <person name="Mewes H.-W."/>
            <person name="Frishman D."/>
            <person name="Stocker S."/>
            <person name="Lupas A.N."/>
            <person name="Baumeister W."/>
        </authorList>
    </citation>
    <scope>NUCLEOTIDE SEQUENCE [LARGE SCALE GENOMIC DNA]</scope>
    <source>
        <strain>ATCC 25905 / DSM 1728 / JCM 9062 / NBRC 15155 / AMRC-C165</strain>
    </source>
</reference>
<protein>
    <recommendedName>
        <fullName evidence="1">DNA-directed RNA polymerase subunit Rpo10</fullName>
        <ecNumber evidence="1">2.7.7.6</ecNumber>
    </recommendedName>
    <alternativeName>
        <fullName evidence="1">DNA-directed RNA polymerase subunit N</fullName>
    </alternativeName>
</protein>
<proteinExistence type="inferred from homology"/>
<evidence type="ECO:0000255" key="1">
    <source>
        <dbReference type="HAMAP-Rule" id="MF_00250"/>
    </source>
</evidence>
<organism>
    <name type="scientific">Thermoplasma acidophilum (strain ATCC 25905 / DSM 1728 / JCM 9062 / NBRC 15155 / AMRC-C165)</name>
    <dbReference type="NCBI Taxonomy" id="273075"/>
    <lineage>
        <taxon>Archaea</taxon>
        <taxon>Methanobacteriati</taxon>
        <taxon>Thermoplasmatota</taxon>
        <taxon>Thermoplasmata</taxon>
        <taxon>Thermoplasmatales</taxon>
        <taxon>Thermoplasmataceae</taxon>
        <taxon>Thermoplasma</taxon>
    </lineage>
</organism>
<sequence length="72" mass="8368">MIIPVRCFSCGRVIASDYGRYIKRVNEIKAEGRDPSPEEIEKIFDDLGIERYCCRRMIVSHVDLISEIMPFS</sequence>
<keyword id="KW-0963">Cytoplasm</keyword>
<keyword id="KW-0240">DNA-directed RNA polymerase</keyword>
<keyword id="KW-0479">Metal-binding</keyword>
<keyword id="KW-0548">Nucleotidyltransferase</keyword>
<keyword id="KW-1185">Reference proteome</keyword>
<keyword id="KW-0804">Transcription</keyword>
<keyword id="KW-0808">Transferase</keyword>
<keyword id="KW-0862">Zinc</keyword>
<comment type="function">
    <text evidence="1">DNA-dependent RNA polymerase (RNAP) catalyzes the transcription of DNA into RNA using the four ribonucleoside triphosphates as substrates.</text>
</comment>
<comment type="catalytic activity">
    <reaction evidence="1">
        <text>RNA(n) + a ribonucleoside 5'-triphosphate = RNA(n+1) + diphosphate</text>
        <dbReference type="Rhea" id="RHEA:21248"/>
        <dbReference type="Rhea" id="RHEA-COMP:14527"/>
        <dbReference type="Rhea" id="RHEA-COMP:17342"/>
        <dbReference type="ChEBI" id="CHEBI:33019"/>
        <dbReference type="ChEBI" id="CHEBI:61557"/>
        <dbReference type="ChEBI" id="CHEBI:140395"/>
        <dbReference type="EC" id="2.7.7.6"/>
    </reaction>
</comment>
<comment type="cofactor">
    <cofactor evidence="1">
        <name>Zn(2+)</name>
        <dbReference type="ChEBI" id="CHEBI:29105"/>
    </cofactor>
    <text evidence="1">Binds 1 zinc ion.</text>
</comment>
<comment type="subunit">
    <text evidence="1">Part of the RNA polymerase complex.</text>
</comment>
<comment type="subcellular location">
    <subcellularLocation>
        <location evidence="1">Cytoplasm</location>
    </subcellularLocation>
</comment>
<comment type="similarity">
    <text evidence="1">Belongs to the archaeal Rpo10/eukaryotic RPB10 RNA polymerase subunit family.</text>
</comment>
<gene>
    <name evidence="1" type="primary">rpo10</name>
    <name evidence="1" type="synonym">rpoN</name>
    <name type="ordered locus">Ta0431</name>
</gene>
<dbReference type="EC" id="2.7.7.6" evidence="1"/>
<dbReference type="EMBL" id="AL445064">
    <property type="protein sequence ID" value="CAC11573.1"/>
    <property type="molecule type" value="Genomic_DNA"/>
</dbReference>
<dbReference type="RefSeq" id="WP_010900858.1">
    <property type="nucleotide sequence ID" value="NC_002578.1"/>
</dbReference>
<dbReference type="SMR" id="Q9HL09"/>
<dbReference type="FunCoup" id="Q9HL09">
    <property type="interactions" value="79"/>
</dbReference>
<dbReference type="STRING" id="273075.gene:9571651"/>
<dbReference type="PaxDb" id="273075-Ta0431"/>
<dbReference type="EnsemblBacteria" id="CAC11573">
    <property type="protein sequence ID" value="CAC11573"/>
    <property type="gene ID" value="CAC11573"/>
</dbReference>
<dbReference type="KEGG" id="tac:Ta0431"/>
<dbReference type="eggNOG" id="arCOG04244">
    <property type="taxonomic scope" value="Archaea"/>
</dbReference>
<dbReference type="HOGENOM" id="CLU_143122_2_1_2"/>
<dbReference type="InParanoid" id="Q9HL09"/>
<dbReference type="OrthoDB" id="371754at2157"/>
<dbReference type="Proteomes" id="UP000001024">
    <property type="component" value="Chromosome"/>
</dbReference>
<dbReference type="GO" id="GO:0005737">
    <property type="term" value="C:cytoplasm"/>
    <property type="evidence" value="ECO:0007669"/>
    <property type="project" value="UniProtKB-SubCell"/>
</dbReference>
<dbReference type="GO" id="GO:0000428">
    <property type="term" value="C:DNA-directed RNA polymerase complex"/>
    <property type="evidence" value="ECO:0007669"/>
    <property type="project" value="UniProtKB-KW"/>
</dbReference>
<dbReference type="GO" id="GO:0003677">
    <property type="term" value="F:DNA binding"/>
    <property type="evidence" value="ECO:0007669"/>
    <property type="project" value="InterPro"/>
</dbReference>
<dbReference type="GO" id="GO:0003899">
    <property type="term" value="F:DNA-directed RNA polymerase activity"/>
    <property type="evidence" value="ECO:0007669"/>
    <property type="project" value="UniProtKB-UniRule"/>
</dbReference>
<dbReference type="GO" id="GO:0008270">
    <property type="term" value="F:zinc ion binding"/>
    <property type="evidence" value="ECO:0007669"/>
    <property type="project" value="UniProtKB-UniRule"/>
</dbReference>
<dbReference type="GO" id="GO:0006351">
    <property type="term" value="P:DNA-templated transcription"/>
    <property type="evidence" value="ECO:0007669"/>
    <property type="project" value="UniProtKB-UniRule"/>
</dbReference>
<dbReference type="Gene3D" id="1.10.10.60">
    <property type="entry name" value="Homeodomain-like"/>
    <property type="match status" value="1"/>
</dbReference>
<dbReference type="HAMAP" id="MF_00250">
    <property type="entry name" value="RNApol_arch_Rpo10"/>
    <property type="match status" value="1"/>
</dbReference>
<dbReference type="InterPro" id="IPR023580">
    <property type="entry name" value="RNA_pol_su_RPB10"/>
</dbReference>
<dbReference type="InterPro" id="IPR020789">
    <property type="entry name" value="RNA_pol_suN_Zn-BS"/>
</dbReference>
<dbReference type="InterPro" id="IPR000268">
    <property type="entry name" value="RPABC5/Rpb10"/>
</dbReference>
<dbReference type="NCBIfam" id="NF003089">
    <property type="entry name" value="PRK04016.1"/>
    <property type="match status" value="1"/>
</dbReference>
<dbReference type="PANTHER" id="PTHR23431:SF3">
    <property type="entry name" value="DNA-DIRECTED RNA POLYMERASES I, II, AND III SUBUNIT RPABC5"/>
    <property type="match status" value="1"/>
</dbReference>
<dbReference type="PANTHER" id="PTHR23431">
    <property type="entry name" value="DNA-DIRECTED RNA POLYMERASES I, II, AND III SUBUNIT RPABC5 FAMILY MEMBER"/>
    <property type="match status" value="1"/>
</dbReference>
<dbReference type="Pfam" id="PF01194">
    <property type="entry name" value="RNA_pol_N"/>
    <property type="match status" value="1"/>
</dbReference>
<dbReference type="PIRSF" id="PIRSF005653">
    <property type="entry name" value="RNA_pol_N/8_sub"/>
    <property type="match status" value="1"/>
</dbReference>
<dbReference type="SUPFAM" id="SSF46924">
    <property type="entry name" value="RNA polymerase subunit RPB10"/>
    <property type="match status" value="1"/>
</dbReference>
<dbReference type="PROSITE" id="PS01112">
    <property type="entry name" value="RNA_POL_N_8KD"/>
    <property type="match status" value="1"/>
</dbReference>